<evidence type="ECO:0000255" key="1"/>
<evidence type="ECO:0000269" key="2">
    <source>
    </source>
</evidence>
<evidence type="ECO:0000269" key="3">
    <source>
    </source>
</evidence>
<evidence type="ECO:0000269" key="4">
    <source>
    </source>
</evidence>
<evidence type="ECO:0000269" key="5">
    <source>
    </source>
</evidence>
<evidence type="ECO:0000269" key="6">
    <source>
    </source>
</evidence>
<evidence type="ECO:0000303" key="7">
    <source>
    </source>
</evidence>
<evidence type="ECO:0000303" key="8">
    <source>
    </source>
</evidence>
<evidence type="ECO:0000305" key="9"/>
<evidence type="ECO:0000305" key="10">
    <source>
    </source>
</evidence>
<evidence type="ECO:0000305" key="11">
    <source>
    </source>
</evidence>
<evidence type="ECO:0000312" key="12">
    <source>
        <dbReference type="SGD" id="S000004243"/>
    </source>
</evidence>
<feature type="transit peptide" description="Mitochondrion" evidence="1">
    <location>
        <begin position="1"/>
        <end position="18"/>
    </location>
</feature>
<feature type="chain" id="PRO_0000200737" description="ABC1 family protein MCP2">
    <location>
        <begin position="19"/>
        <end position="569"/>
    </location>
</feature>
<feature type="topological domain" description="Mitochondrial matrix" evidence="10">
    <location>
        <begin position="19"/>
        <end position="34"/>
    </location>
</feature>
<feature type="transmembrane region" description="Helical" evidence="1">
    <location>
        <begin position="35"/>
        <end position="51"/>
    </location>
</feature>
<feature type="topological domain" description="Mitochondrial intermembrane" evidence="5">
    <location>
        <begin position="52"/>
        <end position="569"/>
    </location>
</feature>
<dbReference type="EMBL" id="U20865">
    <property type="protein sequence ID" value="AAB67388.1"/>
    <property type="molecule type" value="Genomic_DNA"/>
</dbReference>
<dbReference type="EMBL" id="BK006945">
    <property type="protein sequence ID" value="DAA09566.1"/>
    <property type="molecule type" value="Genomic_DNA"/>
</dbReference>
<dbReference type="PIR" id="S59398">
    <property type="entry name" value="S59398"/>
</dbReference>
<dbReference type="RefSeq" id="NP_013354.1">
    <property type="nucleotide sequence ID" value="NM_001182140.1"/>
</dbReference>
<dbReference type="SMR" id="Q06567"/>
<dbReference type="BioGRID" id="31520">
    <property type="interactions" value="66"/>
</dbReference>
<dbReference type="DIP" id="DIP-4782N"/>
<dbReference type="FunCoup" id="Q06567">
    <property type="interactions" value="536"/>
</dbReference>
<dbReference type="IntAct" id="Q06567">
    <property type="interactions" value="3"/>
</dbReference>
<dbReference type="MINT" id="Q06567"/>
<dbReference type="STRING" id="4932.YLR253W"/>
<dbReference type="PaxDb" id="4932-YLR253W"/>
<dbReference type="PeptideAtlas" id="Q06567"/>
<dbReference type="DNASU" id="850955"/>
<dbReference type="EnsemblFungi" id="YLR253W_mRNA">
    <property type="protein sequence ID" value="YLR253W"/>
    <property type="gene ID" value="YLR253W"/>
</dbReference>
<dbReference type="GeneID" id="850955"/>
<dbReference type="KEGG" id="sce:YLR253W"/>
<dbReference type="AGR" id="SGD:S000004243"/>
<dbReference type="SGD" id="S000004243">
    <property type="gene designation" value="MCP2"/>
</dbReference>
<dbReference type="VEuPathDB" id="FungiDB:YLR253W"/>
<dbReference type="eggNOG" id="KOG1235">
    <property type="taxonomic scope" value="Eukaryota"/>
</dbReference>
<dbReference type="GeneTree" id="ENSGT00940000158221"/>
<dbReference type="HOGENOM" id="CLU_006533_2_5_1"/>
<dbReference type="InParanoid" id="Q06567"/>
<dbReference type="OMA" id="KVQYPWI"/>
<dbReference type="OrthoDB" id="427480at2759"/>
<dbReference type="BioCyc" id="YEAST:G3O-32357-MONOMER"/>
<dbReference type="BioGRID-ORCS" id="850955">
    <property type="hits" value="0 hits in 13 CRISPR screens"/>
</dbReference>
<dbReference type="PRO" id="PR:Q06567"/>
<dbReference type="Proteomes" id="UP000002311">
    <property type="component" value="Chromosome XII"/>
</dbReference>
<dbReference type="RNAct" id="Q06567">
    <property type="molecule type" value="protein"/>
</dbReference>
<dbReference type="GO" id="GO:0005743">
    <property type="term" value="C:mitochondrial inner membrane"/>
    <property type="evidence" value="ECO:0000314"/>
    <property type="project" value="SGD"/>
</dbReference>
<dbReference type="GO" id="GO:0031966">
    <property type="term" value="C:mitochondrial membrane"/>
    <property type="evidence" value="ECO:0000314"/>
    <property type="project" value="SGD"/>
</dbReference>
<dbReference type="GO" id="GO:0005739">
    <property type="term" value="C:mitochondrion"/>
    <property type="evidence" value="ECO:0007005"/>
    <property type="project" value="SGD"/>
</dbReference>
<dbReference type="GO" id="GO:0055088">
    <property type="term" value="P:lipid homeostasis"/>
    <property type="evidence" value="ECO:0000316"/>
    <property type="project" value="SGD"/>
</dbReference>
<dbReference type="GO" id="GO:0007005">
    <property type="term" value="P:mitochondrion organization"/>
    <property type="evidence" value="ECO:0000315"/>
    <property type="project" value="SGD"/>
</dbReference>
<dbReference type="CDD" id="cd13969">
    <property type="entry name" value="ADCK1-like"/>
    <property type="match status" value="1"/>
</dbReference>
<dbReference type="InterPro" id="IPR004147">
    <property type="entry name" value="ABC1_dom"/>
</dbReference>
<dbReference type="InterPro" id="IPR045307">
    <property type="entry name" value="ADCK1_dom"/>
</dbReference>
<dbReference type="InterPro" id="IPR011009">
    <property type="entry name" value="Kinase-like_dom_sf"/>
</dbReference>
<dbReference type="InterPro" id="IPR051130">
    <property type="entry name" value="Mito_struct-func_regulator"/>
</dbReference>
<dbReference type="PANTHER" id="PTHR43173:SF19">
    <property type="entry name" value="AARF DOMAIN-CONTAINING PROTEIN KINASE 1"/>
    <property type="match status" value="1"/>
</dbReference>
<dbReference type="PANTHER" id="PTHR43173">
    <property type="entry name" value="ABC1 FAMILY PROTEIN"/>
    <property type="match status" value="1"/>
</dbReference>
<dbReference type="Pfam" id="PF03109">
    <property type="entry name" value="ABC1"/>
    <property type="match status" value="1"/>
</dbReference>
<dbReference type="SUPFAM" id="SSF56112">
    <property type="entry name" value="Protein kinase-like (PK-like)"/>
    <property type="match status" value="1"/>
</dbReference>
<protein>
    <recommendedName>
        <fullName evidence="10">ABC1 family protein MCP2</fullName>
    </recommendedName>
    <alternativeName>
        <fullName evidence="7">MDM10-complementing protein 2</fullName>
    </alternativeName>
    <alternativeName>
        <fullName evidence="11">MIOREX complex component 13</fullName>
    </alternativeName>
    <alternativeName>
        <fullName evidence="8">Mitochondrial organization of gene expression protein 13</fullName>
    </alternativeName>
</protein>
<comment type="function">
    <text evidence="5 6">Component of MIOREX complexes, large expressome-like assemblies of ribosomes with factors involved in all the steps of post-transcriptional gene expression (PubMed:25683707). Involved in mitochondrial lipid homeostasis (PubMed:23781023).</text>
</comment>
<comment type="subcellular location">
    <subcellularLocation>
        <location evidence="2 4">Mitochondrion</location>
    </subcellularLocation>
    <subcellularLocation>
        <location evidence="5">Mitochondrion inner membrane</location>
        <topology evidence="1">Single-pass membrane protein</topology>
    </subcellularLocation>
</comment>
<comment type="miscellaneous">
    <text evidence="3">Present with 1600 molecules/cell in log phase SD medium.</text>
</comment>
<comment type="similarity">
    <text evidence="9">Belongs to the protein kinase superfamily. ADCK protein kinase family.</text>
</comment>
<name>MCP2_YEAST</name>
<proteinExistence type="evidence at protein level"/>
<sequence length="569" mass="65917">MMTKAFFNKLPFEVFRRYVRTGKSIPQRSPRTRKSLLVGGTIASAVVLYNFNDTFHDSVKHTALTTKRIAVVTQATTRCFYHYKRALNKSYENKKEREVALNKCHKMCALITLHALRSNGGIYIKLGQHIGAMTYLLPKEWTDTMIPLQDHCPESTYEEIDELFKEDLGTSIEDMFLEFNKTPIGVASLAQVHVAKLKNSDGKGSSVAVKCQHPSLKEFIPLDVMLTRTVFELLDVFFPDYPLTWLGDELQSSIYVELNFTKEAENAEKTRHYFSKFKKQTALKIPKVIESHKRILIMEYVGGKRLDDLEYIDSHGISRSEVSSCLSHIFNNMIFTPNVGIHCDPHGGNLAIRSVKPAKDNGYHNFEIVLFDHGLYRYPSTRTRRLYAKFWLSLLFDKDQTKMKKYAKGFANITDEQFPLLAAAITGRSIDAALNYDISTSRTQEEMDVMANGILEGTLLSDLMSILSRIPRVVLLILKTNDLTRHLDECLQNPLGPERTFLIMTQYCAKTVYDEKVERINSEYARWSIKWMWENLTNWIVYERRINQLYFYDFVLWWKKFIPKTWLSS</sequence>
<organism>
    <name type="scientific">Saccharomyces cerevisiae (strain ATCC 204508 / S288c)</name>
    <name type="common">Baker's yeast</name>
    <dbReference type="NCBI Taxonomy" id="559292"/>
    <lineage>
        <taxon>Eukaryota</taxon>
        <taxon>Fungi</taxon>
        <taxon>Dikarya</taxon>
        <taxon>Ascomycota</taxon>
        <taxon>Saccharomycotina</taxon>
        <taxon>Saccharomycetes</taxon>
        <taxon>Saccharomycetales</taxon>
        <taxon>Saccharomycetaceae</taxon>
        <taxon>Saccharomyces</taxon>
    </lineage>
</organism>
<reference key="1">
    <citation type="journal article" date="1997" name="Nature">
        <title>The nucleotide sequence of Saccharomyces cerevisiae chromosome XII.</title>
        <authorList>
            <person name="Johnston M."/>
            <person name="Hillier L.W."/>
            <person name="Riles L."/>
            <person name="Albermann K."/>
            <person name="Andre B."/>
            <person name="Ansorge W."/>
            <person name="Benes V."/>
            <person name="Brueckner M."/>
            <person name="Delius H."/>
            <person name="Dubois E."/>
            <person name="Duesterhoeft A."/>
            <person name="Entian K.-D."/>
            <person name="Floeth M."/>
            <person name="Goffeau A."/>
            <person name="Hebling U."/>
            <person name="Heumann K."/>
            <person name="Heuss-Neitzel D."/>
            <person name="Hilbert H."/>
            <person name="Hilger F."/>
            <person name="Kleine K."/>
            <person name="Koetter P."/>
            <person name="Louis E.J."/>
            <person name="Messenguy F."/>
            <person name="Mewes H.-W."/>
            <person name="Miosga T."/>
            <person name="Moestl D."/>
            <person name="Mueller-Auer S."/>
            <person name="Nentwich U."/>
            <person name="Obermaier B."/>
            <person name="Piravandi E."/>
            <person name="Pohl T.M."/>
            <person name="Portetelle D."/>
            <person name="Purnelle B."/>
            <person name="Rechmann S."/>
            <person name="Rieger M."/>
            <person name="Rinke M."/>
            <person name="Rose M."/>
            <person name="Scharfe M."/>
            <person name="Scherens B."/>
            <person name="Scholler P."/>
            <person name="Schwager C."/>
            <person name="Schwarz S."/>
            <person name="Underwood A.P."/>
            <person name="Urrestarazu L.A."/>
            <person name="Vandenbol M."/>
            <person name="Verhasselt P."/>
            <person name="Vierendeels F."/>
            <person name="Voet M."/>
            <person name="Volckaert G."/>
            <person name="Voss H."/>
            <person name="Wambutt R."/>
            <person name="Wedler E."/>
            <person name="Wedler H."/>
            <person name="Zimmermann F.K."/>
            <person name="Zollner A."/>
            <person name="Hani J."/>
            <person name="Hoheisel J.D."/>
        </authorList>
    </citation>
    <scope>NUCLEOTIDE SEQUENCE [LARGE SCALE GENOMIC DNA]</scope>
    <source>
        <strain>ATCC 204508 / S288c</strain>
    </source>
</reference>
<reference key="2">
    <citation type="journal article" date="2014" name="G3 (Bethesda)">
        <title>The reference genome sequence of Saccharomyces cerevisiae: Then and now.</title>
        <authorList>
            <person name="Engel S.R."/>
            <person name="Dietrich F.S."/>
            <person name="Fisk D.G."/>
            <person name="Binkley G."/>
            <person name="Balakrishnan R."/>
            <person name="Costanzo M.C."/>
            <person name="Dwight S.S."/>
            <person name="Hitz B.C."/>
            <person name="Karra K."/>
            <person name="Nash R.S."/>
            <person name="Weng S."/>
            <person name="Wong E.D."/>
            <person name="Lloyd P."/>
            <person name="Skrzypek M.S."/>
            <person name="Miyasato S.R."/>
            <person name="Simison M."/>
            <person name="Cherry J.M."/>
        </authorList>
    </citation>
    <scope>GENOME REANNOTATION</scope>
    <source>
        <strain>ATCC 204508 / S288c</strain>
    </source>
</reference>
<reference key="3">
    <citation type="journal article" date="2003" name="Nature">
        <title>Global analysis of protein localization in budding yeast.</title>
        <authorList>
            <person name="Huh W.-K."/>
            <person name="Falvo J.V."/>
            <person name="Gerke L.C."/>
            <person name="Carroll A.S."/>
            <person name="Howson R.W."/>
            <person name="Weissman J.S."/>
            <person name="O'Shea E.K."/>
        </authorList>
    </citation>
    <scope>SUBCELLULAR LOCATION [LARGE SCALE ANALYSIS]</scope>
</reference>
<reference key="4">
    <citation type="journal article" date="2003" name="Nature">
        <title>Global analysis of protein expression in yeast.</title>
        <authorList>
            <person name="Ghaemmaghami S."/>
            <person name="Huh W.-K."/>
            <person name="Bower K."/>
            <person name="Howson R.W."/>
            <person name="Belle A."/>
            <person name="Dephoure N."/>
            <person name="O'Shea E.K."/>
            <person name="Weissman J.S."/>
        </authorList>
    </citation>
    <scope>LEVEL OF PROTEIN EXPRESSION [LARGE SCALE ANALYSIS]</scope>
</reference>
<reference key="5">
    <citation type="journal article" date="2006" name="J. Proteome Res.">
        <title>Toward the complete yeast mitochondrial proteome: multidimensional separation techniques for mitochondrial proteomics.</title>
        <authorList>
            <person name="Reinders J."/>
            <person name="Zahedi R.P."/>
            <person name="Pfanner N."/>
            <person name="Meisinger C."/>
            <person name="Sickmann A."/>
        </authorList>
    </citation>
    <scope>SUBCELLULAR LOCATION [LARGE SCALE ANALYSIS]</scope>
    <scope>IDENTIFICATION BY MASS SPECTROMETRY</scope>
</reference>
<reference key="6">
    <citation type="journal article" date="2013" name="J. Cell Sci.">
        <title>Mcp1 and Mcp2, two novel proteins involved in mitochondrial lipid homeostasis.</title>
        <authorList>
            <person name="Tan T."/>
            <person name="Ozbalci C."/>
            <person name="Brugger B."/>
            <person name="Rapaport D."/>
            <person name="Dimmer K.S."/>
        </authorList>
    </citation>
    <scope>FUNCTION</scope>
    <scope>SUBCELLULAR LOCATION</scope>
    <scope>TOPOLOGY</scope>
</reference>
<reference key="7">
    <citation type="journal article" date="2015" name="Cell Rep.">
        <title>Organization of mitochondrial gene expression in two distinct ribosome-containing assemblies.</title>
        <authorList>
            <person name="Kehrein K."/>
            <person name="Schilling R."/>
            <person name="Moller-Hergt B.V."/>
            <person name="Wurm C.A."/>
            <person name="Jakobs S."/>
            <person name="Lamkemeyer T."/>
            <person name="Langer T."/>
            <person name="Ott M."/>
        </authorList>
    </citation>
    <scope>FUNCTION</scope>
    <scope>SUBUNIT</scope>
</reference>
<keyword id="KW-0472">Membrane</keyword>
<keyword id="KW-0496">Mitochondrion</keyword>
<keyword id="KW-0999">Mitochondrion inner membrane</keyword>
<keyword id="KW-1185">Reference proteome</keyword>
<keyword id="KW-0809">Transit peptide</keyword>
<keyword id="KW-0812">Transmembrane</keyword>
<keyword id="KW-1133">Transmembrane helix</keyword>
<accession>Q06567</accession>
<accession>D6VYQ0</accession>
<gene>
    <name evidence="7" type="primary">MCP2</name>
    <name evidence="8" type="synonym">MRX13</name>
    <name evidence="12" type="ordered locus">YLR253W</name>
    <name type="ORF">L9672.2</name>
</gene>